<organismHost>
    <name type="scientific">Bacillus subtilis</name>
    <dbReference type="NCBI Taxonomy" id="1423"/>
</organismHost>
<gene>
    <name evidence="4" type="primary">13</name>
</gene>
<accession>Q38582</accession>
<comment type="function">
    <text evidence="1 2">Capsid protein self-assembles, with the help of the scaffolding protein gp11, to form an icosahedral capsid with a T=7 symmetry, about 61 nm in diameter. The capsid encapsulates the genomic DNA.</text>
</comment>
<comment type="subunit">
    <text evidence="1 2">Interacts with the scaffolding protein gp11 (PubMed:10656821). Interacts with the decoration protein gp12 (PubMed:22514336).</text>
</comment>
<comment type="subcellular location">
    <subcellularLocation>
        <location evidence="1 2">Virion</location>
    </subcellularLocation>
    <text evidence="1 2">Part of the capsid.</text>
</comment>
<comment type="similarity">
    <text evidence="3">Belongs to the lambda phage major capsid protein family.</text>
</comment>
<name>CAPSD_BPSPP</name>
<reference key="1">
    <citation type="journal article" date="1997" name="J. Mol. Biol.">
        <title>Head morphogenesis genes of the Bacillus subtilis bacteriophage SPP1.</title>
        <authorList>
            <person name="Becker B."/>
            <person name="de la Fuente N."/>
            <person name="Gassel M."/>
            <person name="Guenther D."/>
            <person name="Tavares P."/>
            <person name="Lurz R."/>
            <person name="Trautner T.A."/>
            <person name="Alonso J.C."/>
        </authorList>
    </citation>
    <scope>NUCLEOTIDE SEQUENCE [GENOMIC DNA]</scope>
</reference>
<reference key="2">
    <citation type="journal article" date="1997" name="Gene">
        <title>The complete nucleotide sequence and functional organization of Bacillus subtilis bacteriophage SPP1.</title>
        <authorList>
            <person name="Alonso J.C."/>
            <person name="Luder G."/>
            <person name="Stiege A.C."/>
            <person name="Chai S."/>
            <person name="Weise F."/>
            <person name="Trautner T.A."/>
        </authorList>
    </citation>
    <scope>NUCLEOTIDE SEQUENCE [LARGE SCALE GENOMIC DNA]</scope>
</reference>
<reference key="3">
    <citation type="journal article" date="2000" name="J. Mol. Biol.">
        <title>Shape and DNA packaging activity of bacteriophage SPP1 procapsid: protein components and interactions during assembly.</title>
        <authorList>
            <person name="Droege A."/>
            <person name="Santos M.A."/>
            <person name="Stiege A.C."/>
            <person name="Alonso J.C."/>
            <person name="Lurz R."/>
            <person name="Trautner T.A."/>
            <person name="Tavares P."/>
        </authorList>
    </citation>
    <scope>FUNCTION</scope>
    <scope>INTERACTION WITH THE SCAFFOLDING PROTEIN GP11</scope>
    <scope>SUBCELLULAR LOCATION</scope>
</reference>
<reference evidence="5" key="4">
    <citation type="journal article" date="2012" name="J. Virol.">
        <title>Capsid structure and its stability at the late stages of bacteriophage SPP1 assembly.</title>
        <authorList>
            <person name="White H.E."/>
            <person name="Sherman M.B."/>
            <person name="Brasiles S."/>
            <person name="Jacquet E."/>
            <person name="Seavers P."/>
            <person name="Tavares P."/>
            <person name="Orlova E.V."/>
        </authorList>
    </citation>
    <scope>STRUCTURE BY ELECTRON MICROSCOPY (8.8 ANGSTROMS) OF THE CAPSID</scope>
    <scope>FUNCTION</scope>
    <scope>SUBCELLULAR LOCATION</scope>
    <scope>INTERACTION WITH THE DECORATION PROTEIN GP12</scope>
</reference>
<sequence length="324" mass="35355">MAYTKISDVIVPELFNPYVINTTTQLSAFFQSGIAATDDELNALAKKAGGGSTLNMPYWNDLDGDSQVLNDTDDLVPQKINAGQDKAVLILRGNAWSSHDLAATLSGSDPMQAIGSRVAAYWAREMQKIVFAELAGVFSNDDMKDNKLDISGTADGIYSAETFVDASYKLGDHESLLTAIGMHSATMASAVKQDLIEFVKDSQSGIRFPTYMNKRVIVDDSMPVETLEDGTKVFTSYLFGAGALGYAEGQPEVPTETARNALGSQDILINRKHFVLHPRGVKFTENAMAGTTPTDEELANGANWQRVYDPKKIRIVQFKHRLQA</sequence>
<dbReference type="EMBL" id="X89721">
    <property type="protein sequence ID" value="CAA61870.1"/>
    <property type="molecule type" value="Genomic_DNA"/>
</dbReference>
<dbReference type="EMBL" id="X97918">
    <property type="protein sequence ID" value="CAA66544.1"/>
    <property type="molecule type" value="Genomic_DNA"/>
</dbReference>
<dbReference type="PIR" id="S58142">
    <property type="entry name" value="S58142"/>
</dbReference>
<dbReference type="RefSeq" id="NP_690674.1">
    <property type="nucleotide sequence ID" value="NC_004166.2"/>
</dbReference>
<dbReference type="PDB" id="4AN5">
    <property type="method" value="EM"/>
    <property type="resolution" value="8.80 A"/>
    <property type="chains" value="A/B/C/D/E/F/G=1-324"/>
</dbReference>
<dbReference type="PDB" id="6R3A">
    <property type="method" value="EM"/>
    <property type="resolution" value="4.00 A"/>
    <property type="chains" value="A/B/C/D/E/F/G=2-324"/>
</dbReference>
<dbReference type="PDB" id="6R3B">
    <property type="method" value="EM"/>
    <property type="resolution" value="4.50 A"/>
    <property type="chains" value="A/B/C/D/E/F/G=2-324"/>
</dbReference>
<dbReference type="PDB" id="6RTL">
    <property type="method" value="EM"/>
    <property type="resolution" value="4.20 A"/>
    <property type="chains" value="A/B/C/D/E/F/G=2-324"/>
</dbReference>
<dbReference type="PDBsum" id="4AN5"/>
<dbReference type="PDBsum" id="6R3A"/>
<dbReference type="PDBsum" id="6R3B"/>
<dbReference type="PDBsum" id="6RTL"/>
<dbReference type="EMDB" id="EMD-10002"/>
<dbReference type="EMDB" id="EMD-4716"/>
<dbReference type="EMDB" id="EMD-4717"/>
<dbReference type="SMR" id="Q38582"/>
<dbReference type="KEGG" id="vg:955303"/>
<dbReference type="OrthoDB" id="14333at10239"/>
<dbReference type="EvolutionaryTrace" id="Q38582"/>
<dbReference type="Proteomes" id="UP000002559">
    <property type="component" value="Genome"/>
</dbReference>
<dbReference type="GO" id="GO:0039620">
    <property type="term" value="C:T=7 icosahedral viral capsid"/>
    <property type="evidence" value="ECO:0007669"/>
    <property type="project" value="UniProtKB-KW"/>
</dbReference>
<dbReference type="GO" id="GO:0019028">
    <property type="term" value="C:viral capsid"/>
    <property type="evidence" value="ECO:0000314"/>
    <property type="project" value="UniProtKB"/>
</dbReference>
<dbReference type="InterPro" id="IPR045404">
    <property type="entry name" value="Gp13-like"/>
</dbReference>
<dbReference type="Pfam" id="PF20036">
    <property type="entry name" value="Gp13-like"/>
    <property type="match status" value="1"/>
</dbReference>
<evidence type="ECO:0000269" key="1">
    <source>
    </source>
</evidence>
<evidence type="ECO:0000269" key="2">
    <source>
    </source>
</evidence>
<evidence type="ECO:0000305" key="3"/>
<evidence type="ECO:0000312" key="4">
    <source>
        <dbReference type="EMBL" id="CAA61870.1"/>
    </source>
</evidence>
<evidence type="ECO:0007744" key="5">
    <source>
        <dbReference type="PDB" id="4AN5"/>
    </source>
</evidence>
<feature type="chain" id="PRO_0000438145" description="Major capsid protein">
    <location>
        <begin position="1"/>
        <end position="324"/>
    </location>
</feature>
<proteinExistence type="evidence at protein level"/>
<protein>
    <recommendedName>
        <fullName evidence="3">Major capsid protein</fullName>
    </recommendedName>
    <alternativeName>
        <fullName evidence="3">Gene product 13</fullName>
        <shortName evidence="3">gp13</shortName>
    </alternativeName>
</protein>
<organism evidence="4">
    <name type="scientific">Bacillus phage SPP1</name>
    <name type="common">Bacteriophage SPP1</name>
    <dbReference type="NCBI Taxonomy" id="10724"/>
    <lineage>
        <taxon>Viruses</taxon>
        <taxon>Duplodnaviria</taxon>
        <taxon>Heunggongvirae</taxon>
        <taxon>Uroviricota</taxon>
        <taxon>Caudoviricetes</taxon>
    </lineage>
</organism>
<keyword id="KW-0002">3D-structure</keyword>
<keyword id="KW-0167">Capsid protein</keyword>
<keyword id="KW-1185">Reference proteome</keyword>
<keyword id="KW-1145">T=7 icosahedral capsid protein</keyword>
<keyword id="KW-0946">Virion</keyword>